<organism>
    <name type="scientific">Clostridium perfringens</name>
    <dbReference type="NCBI Taxonomy" id="1502"/>
    <lineage>
        <taxon>Bacteria</taxon>
        <taxon>Bacillati</taxon>
        <taxon>Bacillota</taxon>
        <taxon>Clostridia</taxon>
        <taxon>Eubacteriales</taxon>
        <taxon>Clostridiaceae</taxon>
        <taxon>Clostridium</taxon>
    </lineage>
</organism>
<gene>
    <name type="primary">tnp</name>
</gene>
<protein>
    <recommendedName>
        <fullName>Transposase for insertion sequence element IS1151</fullName>
    </recommendedName>
</protein>
<keyword id="KW-0233">DNA recombination</keyword>
<keyword id="KW-0238">DNA-binding</keyword>
<keyword id="KW-0814">Transposable element</keyword>
<keyword id="KW-0815">Transposition</keyword>
<feature type="chain" id="PRO_0000173299" description="Transposase for insertion sequence element IS1151">
    <location>
        <begin position="1"/>
        <end position="473"/>
    </location>
</feature>
<sequence>MNKKLKYLSKSIKESFDINEINKIAKDSKFIQRKGSITAKDFLMFNVFYGSDICTAPLSQLAAKYDMIFSKQLPKQALDKRFNKYSVEFMKEIFIKFLYSQNNTLTNLERTLRTYFDRVIINDSISFTLPKEFKKKFPGSGGVASPSSIKVQLQYELLTGSFMNIDIFSGIKNDVEYLKTMKKYKDYKDLKLADLGYFKIDYLKRLDKSGTAFISKVKSNTSLYIKNPSPEKYKVGTIKKSSEYIKIDIIKLAEPLAAGETIELTDIYIGSKKELKSRLIITKLTEENKSKRIFNHIEGIKKKRLTLNQRRLDFNSINAYITNVSSNIITMNQVHELYSLRWQIEIIFKVWKSIFKINQVKKVKLERFMCFLYGRLIALLLSSTIVFTSKSIILEVDEKEISELKAFGNLIQYFPKLSFEIFKGEFYISRILKSVLSNFKRFGIKSKKNYKKTAFNILKLIKLESFEVTRFAI</sequence>
<proteinExistence type="inferred from homology"/>
<comment type="function">
    <text>Involved in the transposition of the insertion sequence.</text>
</comment>
<comment type="similarity">
    <text evidence="1">Belongs to the transposase 11 family.</text>
</comment>
<accession>Q05309</accession>
<evidence type="ECO:0000305" key="1"/>
<reference key="1">
    <citation type="journal article" date="1993" name="Nucleic Acids Res.">
        <title>IS1151, an IS-like element of Clostridium perfringens.</title>
        <authorList>
            <person name="Daube G."/>
            <person name="Simon P."/>
            <person name="Kaeckenbeeck A."/>
        </authorList>
    </citation>
    <scope>NUCLEOTIDE SEQUENCE [GENOMIC DNA]</scope>
</reference>
<reference key="2">
    <citation type="submission" date="1994-07" db="EMBL/GenBank/DDBJ databases">
        <authorList>
            <person name="Daube G."/>
        </authorList>
    </citation>
    <scope>SEQUENCE REVISION TO 252-259</scope>
</reference>
<name>T1151_CLOPF</name>
<dbReference type="EMBL" id="X60694">
    <property type="protein sequence ID" value="CAA43103.1"/>
    <property type="molecule type" value="Genomic_DNA"/>
</dbReference>
<dbReference type="EMBL" id="Z18246">
    <property type="protein sequence ID" value="CAA79147.1"/>
    <property type="molecule type" value="Genomic_DNA"/>
</dbReference>
<dbReference type="PIR" id="S30227">
    <property type="entry name" value="S30227"/>
</dbReference>
<dbReference type="RefSeq" id="WP_003474954.1">
    <property type="nucleotide sequence ID" value="NZ_JAJCSZ010000023.1"/>
</dbReference>
<dbReference type="GO" id="GO:0003677">
    <property type="term" value="F:DNA binding"/>
    <property type="evidence" value="ECO:0007669"/>
    <property type="project" value="UniProtKB-KW"/>
</dbReference>
<dbReference type="GO" id="GO:0004803">
    <property type="term" value="F:transposase activity"/>
    <property type="evidence" value="ECO:0007669"/>
    <property type="project" value="InterPro"/>
</dbReference>
<dbReference type="GO" id="GO:0006313">
    <property type="term" value="P:DNA transposition"/>
    <property type="evidence" value="ECO:0007669"/>
    <property type="project" value="InterPro"/>
</dbReference>
<dbReference type="InterPro" id="IPR012337">
    <property type="entry name" value="RNaseH-like_sf"/>
</dbReference>
<dbReference type="InterPro" id="IPR047952">
    <property type="entry name" value="Transpos_IS4"/>
</dbReference>
<dbReference type="InterPro" id="IPR002559">
    <property type="entry name" value="Transposase_11"/>
</dbReference>
<dbReference type="NCBIfam" id="NF033592">
    <property type="entry name" value="transpos_IS4_1"/>
    <property type="match status" value="1"/>
</dbReference>
<dbReference type="PANTHER" id="PTHR33258">
    <property type="entry name" value="TRANSPOSASE INSL FOR INSERTION SEQUENCE ELEMENT IS186A-RELATED"/>
    <property type="match status" value="1"/>
</dbReference>
<dbReference type="PANTHER" id="PTHR33258:SF1">
    <property type="entry name" value="TRANSPOSASE INSL FOR INSERTION SEQUENCE ELEMENT IS186A-RELATED"/>
    <property type="match status" value="1"/>
</dbReference>
<dbReference type="Pfam" id="PF01609">
    <property type="entry name" value="DDE_Tnp_1"/>
    <property type="match status" value="1"/>
</dbReference>
<dbReference type="SUPFAM" id="SSF53098">
    <property type="entry name" value="Ribonuclease H-like"/>
    <property type="match status" value="1"/>
</dbReference>